<gene>
    <name type="primary">Znf428</name>
    <name type="synonym">Zfp428</name>
</gene>
<evidence type="ECO:0000250" key="1">
    <source>
        <dbReference type="UniProtKB" id="Q96B54"/>
    </source>
</evidence>
<evidence type="ECO:0000255" key="2">
    <source>
        <dbReference type="PROSITE-ProRule" id="PRU00042"/>
    </source>
</evidence>
<evidence type="ECO:0000256" key="3">
    <source>
        <dbReference type="SAM" id="MobiDB-lite"/>
    </source>
</evidence>
<evidence type="ECO:0000305" key="4"/>
<organism>
    <name type="scientific">Mus musculus</name>
    <name type="common">Mouse</name>
    <dbReference type="NCBI Taxonomy" id="10090"/>
    <lineage>
        <taxon>Eukaryota</taxon>
        <taxon>Metazoa</taxon>
        <taxon>Chordata</taxon>
        <taxon>Craniata</taxon>
        <taxon>Vertebrata</taxon>
        <taxon>Euteleostomi</taxon>
        <taxon>Mammalia</taxon>
        <taxon>Eutheria</taxon>
        <taxon>Euarchontoglires</taxon>
        <taxon>Glires</taxon>
        <taxon>Rodentia</taxon>
        <taxon>Myomorpha</taxon>
        <taxon>Muroidea</taxon>
        <taxon>Muridae</taxon>
        <taxon>Murinae</taxon>
        <taxon>Mus</taxon>
        <taxon>Mus</taxon>
    </lineage>
</organism>
<name>ZN428_MOUSE</name>
<keyword id="KW-0479">Metal-binding</keyword>
<keyword id="KW-0597">Phosphoprotein</keyword>
<keyword id="KW-1185">Reference proteome</keyword>
<keyword id="KW-0862">Zinc</keyword>
<keyword id="KW-0863">Zinc-finger</keyword>
<reference key="1">
    <citation type="journal article" date="2005" name="Science">
        <title>The transcriptional landscape of the mammalian genome.</title>
        <authorList>
            <person name="Carninci P."/>
            <person name="Kasukawa T."/>
            <person name="Katayama S."/>
            <person name="Gough J."/>
            <person name="Frith M.C."/>
            <person name="Maeda N."/>
            <person name="Oyama R."/>
            <person name="Ravasi T."/>
            <person name="Lenhard B."/>
            <person name="Wells C."/>
            <person name="Kodzius R."/>
            <person name="Shimokawa K."/>
            <person name="Bajic V.B."/>
            <person name="Brenner S.E."/>
            <person name="Batalov S."/>
            <person name="Forrest A.R."/>
            <person name="Zavolan M."/>
            <person name="Davis M.J."/>
            <person name="Wilming L.G."/>
            <person name="Aidinis V."/>
            <person name="Allen J.E."/>
            <person name="Ambesi-Impiombato A."/>
            <person name="Apweiler R."/>
            <person name="Aturaliya R.N."/>
            <person name="Bailey T.L."/>
            <person name="Bansal M."/>
            <person name="Baxter L."/>
            <person name="Beisel K.W."/>
            <person name="Bersano T."/>
            <person name="Bono H."/>
            <person name="Chalk A.M."/>
            <person name="Chiu K.P."/>
            <person name="Choudhary V."/>
            <person name="Christoffels A."/>
            <person name="Clutterbuck D.R."/>
            <person name="Crowe M.L."/>
            <person name="Dalla E."/>
            <person name="Dalrymple B.P."/>
            <person name="de Bono B."/>
            <person name="Della Gatta G."/>
            <person name="di Bernardo D."/>
            <person name="Down T."/>
            <person name="Engstrom P."/>
            <person name="Fagiolini M."/>
            <person name="Faulkner G."/>
            <person name="Fletcher C.F."/>
            <person name="Fukushima T."/>
            <person name="Furuno M."/>
            <person name="Futaki S."/>
            <person name="Gariboldi M."/>
            <person name="Georgii-Hemming P."/>
            <person name="Gingeras T.R."/>
            <person name="Gojobori T."/>
            <person name="Green R.E."/>
            <person name="Gustincich S."/>
            <person name="Harbers M."/>
            <person name="Hayashi Y."/>
            <person name="Hensch T.K."/>
            <person name="Hirokawa N."/>
            <person name="Hill D."/>
            <person name="Huminiecki L."/>
            <person name="Iacono M."/>
            <person name="Ikeo K."/>
            <person name="Iwama A."/>
            <person name="Ishikawa T."/>
            <person name="Jakt M."/>
            <person name="Kanapin A."/>
            <person name="Katoh M."/>
            <person name="Kawasawa Y."/>
            <person name="Kelso J."/>
            <person name="Kitamura H."/>
            <person name="Kitano H."/>
            <person name="Kollias G."/>
            <person name="Krishnan S.P."/>
            <person name="Kruger A."/>
            <person name="Kummerfeld S.K."/>
            <person name="Kurochkin I.V."/>
            <person name="Lareau L.F."/>
            <person name="Lazarevic D."/>
            <person name="Lipovich L."/>
            <person name="Liu J."/>
            <person name="Liuni S."/>
            <person name="McWilliam S."/>
            <person name="Madan Babu M."/>
            <person name="Madera M."/>
            <person name="Marchionni L."/>
            <person name="Matsuda H."/>
            <person name="Matsuzawa S."/>
            <person name="Miki H."/>
            <person name="Mignone F."/>
            <person name="Miyake S."/>
            <person name="Morris K."/>
            <person name="Mottagui-Tabar S."/>
            <person name="Mulder N."/>
            <person name="Nakano N."/>
            <person name="Nakauchi H."/>
            <person name="Ng P."/>
            <person name="Nilsson R."/>
            <person name="Nishiguchi S."/>
            <person name="Nishikawa S."/>
            <person name="Nori F."/>
            <person name="Ohara O."/>
            <person name="Okazaki Y."/>
            <person name="Orlando V."/>
            <person name="Pang K.C."/>
            <person name="Pavan W.J."/>
            <person name="Pavesi G."/>
            <person name="Pesole G."/>
            <person name="Petrovsky N."/>
            <person name="Piazza S."/>
            <person name="Reed J."/>
            <person name="Reid J.F."/>
            <person name="Ring B.Z."/>
            <person name="Ringwald M."/>
            <person name="Rost B."/>
            <person name="Ruan Y."/>
            <person name="Salzberg S.L."/>
            <person name="Sandelin A."/>
            <person name="Schneider C."/>
            <person name="Schoenbach C."/>
            <person name="Sekiguchi K."/>
            <person name="Semple C.A."/>
            <person name="Seno S."/>
            <person name="Sessa L."/>
            <person name="Sheng Y."/>
            <person name="Shibata Y."/>
            <person name="Shimada H."/>
            <person name="Shimada K."/>
            <person name="Silva D."/>
            <person name="Sinclair B."/>
            <person name="Sperling S."/>
            <person name="Stupka E."/>
            <person name="Sugiura K."/>
            <person name="Sultana R."/>
            <person name="Takenaka Y."/>
            <person name="Taki K."/>
            <person name="Tammoja K."/>
            <person name="Tan S.L."/>
            <person name="Tang S."/>
            <person name="Taylor M.S."/>
            <person name="Tegner J."/>
            <person name="Teichmann S.A."/>
            <person name="Ueda H.R."/>
            <person name="van Nimwegen E."/>
            <person name="Verardo R."/>
            <person name="Wei C.L."/>
            <person name="Yagi K."/>
            <person name="Yamanishi H."/>
            <person name="Zabarovsky E."/>
            <person name="Zhu S."/>
            <person name="Zimmer A."/>
            <person name="Hide W."/>
            <person name="Bult C."/>
            <person name="Grimmond S.M."/>
            <person name="Teasdale R.D."/>
            <person name="Liu E.T."/>
            <person name="Brusic V."/>
            <person name="Quackenbush J."/>
            <person name="Wahlestedt C."/>
            <person name="Mattick J.S."/>
            <person name="Hume D.A."/>
            <person name="Kai C."/>
            <person name="Sasaki D."/>
            <person name="Tomaru Y."/>
            <person name="Fukuda S."/>
            <person name="Kanamori-Katayama M."/>
            <person name="Suzuki M."/>
            <person name="Aoki J."/>
            <person name="Arakawa T."/>
            <person name="Iida J."/>
            <person name="Imamura K."/>
            <person name="Itoh M."/>
            <person name="Kato T."/>
            <person name="Kawaji H."/>
            <person name="Kawagashira N."/>
            <person name="Kawashima T."/>
            <person name="Kojima M."/>
            <person name="Kondo S."/>
            <person name="Konno H."/>
            <person name="Nakano K."/>
            <person name="Ninomiya N."/>
            <person name="Nishio T."/>
            <person name="Okada M."/>
            <person name="Plessy C."/>
            <person name="Shibata K."/>
            <person name="Shiraki T."/>
            <person name="Suzuki S."/>
            <person name="Tagami M."/>
            <person name="Waki K."/>
            <person name="Watahiki A."/>
            <person name="Okamura-Oho Y."/>
            <person name="Suzuki H."/>
            <person name="Kawai J."/>
            <person name="Hayashizaki Y."/>
        </authorList>
    </citation>
    <scope>NUCLEOTIDE SEQUENCE [LARGE SCALE MRNA]</scope>
    <source>
        <strain>C57BL/6J</strain>
        <tissue>Cerebellum</tissue>
    </source>
</reference>
<reference key="2">
    <citation type="journal article" date="2004" name="Genome Res.">
        <title>The status, quality, and expansion of the NIH full-length cDNA project: the Mammalian Gene Collection (MGC).</title>
        <authorList>
            <consortium name="The MGC Project Team"/>
        </authorList>
    </citation>
    <scope>NUCLEOTIDE SEQUENCE [LARGE SCALE MRNA]</scope>
    <source>
        <strain>Czech II</strain>
        <tissue>Eye</tissue>
        <tissue>Lung</tissue>
    </source>
</reference>
<reference key="3">
    <citation type="journal article" date="2010" name="Cell">
        <title>A tissue-specific atlas of mouse protein phosphorylation and expression.</title>
        <authorList>
            <person name="Huttlin E.L."/>
            <person name="Jedrychowski M.P."/>
            <person name="Elias J.E."/>
            <person name="Goswami T."/>
            <person name="Rad R."/>
            <person name="Beausoleil S.A."/>
            <person name="Villen J."/>
            <person name="Haas W."/>
            <person name="Sowa M.E."/>
            <person name="Gygi S.P."/>
        </authorList>
    </citation>
    <scope>IDENTIFICATION BY MASS SPECTROMETRY [LARGE SCALE ANALYSIS]</scope>
    <source>
        <tissue>Testis</tissue>
    </source>
</reference>
<proteinExistence type="evidence at protein level"/>
<dbReference type="EMBL" id="AK010415">
    <property type="protein sequence ID" value="BAC25296.1"/>
    <property type="molecule type" value="mRNA"/>
</dbReference>
<dbReference type="EMBL" id="AK139174">
    <property type="protein sequence ID" value="BAE23910.1"/>
    <property type="molecule type" value="mRNA"/>
</dbReference>
<dbReference type="EMBL" id="BC024802">
    <property type="protein sequence ID" value="AAH24802.1"/>
    <property type="molecule type" value="mRNA"/>
</dbReference>
<dbReference type="EMBL" id="BC096675">
    <property type="protein sequence ID" value="AAH96675.1"/>
    <property type="molecule type" value="mRNA"/>
</dbReference>
<dbReference type="CCDS" id="CCDS20952.1"/>
<dbReference type="RefSeq" id="NP_001277390.1">
    <property type="nucleotide sequence ID" value="NM_001290461.1"/>
</dbReference>
<dbReference type="RefSeq" id="NP_666295.2">
    <property type="nucleotide sequence ID" value="NM_146183.2"/>
</dbReference>
<dbReference type="RefSeq" id="NP_780351.1">
    <property type="nucleotide sequence ID" value="NM_175142.1"/>
</dbReference>
<dbReference type="RefSeq" id="XP_017177645.1">
    <property type="nucleotide sequence ID" value="XM_017322156.1"/>
</dbReference>
<dbReference type="BioGRID" id="231334">
    <property type="interactions" value="1"/>
</dbReference>
<dbReference type="FunCoup" id="Q8C1M2">
    <property type="interactions" value="250"/>
</dbReference>
<dbReference type="STRING" id="10090.ENSMUSP00000135750"/>
<dbReference type="GlyGen" id="Q8C1M2">
    <property type="glycosylation" value="1 site"/>
</dbReference>
<dbReference type="iPTMnet" id="Q8C1M2"/>
<dbReference type="PhosphoSitePlus" id="Q8C1M2"/>
<dbReference type="PaxDb" id="10090-ENSMUSP00000071318"/>
<dbReference type="ProteomicsDB" id="275287"/>
<dbReference type="Pumba" id="Q8C1M2"/>
<dbReference type="Antibodypedia" id="31091">
    <property type="antibodies" value="85 antibodies from 15 providers"/>
</dbReference>
<dbReference type="DNASU" id="232969"/>
<dbReference type="Ensembl" id="ENSMUST00000071361.13">
    <property type="protein sequence ID" value="ENSMUSP00000071318.7"/>
    <property type="gene ID" value="ENSMUSG00000064264.15"/>
</dbReference>
<dbReference type="GeneID" id="232969"/>
<dbReference type="KEGG" id="mmu:232969"/>
<dbReference type="UCSC" id="uc009fpu.2">
    <property type="organism name" value="mouse"/>
</dbReference>
<dbReference type="AGR" id="MGI:1916463"/>
<dbReference type="CTD" id="232969"/>
<dbReference type="MGI" id="MGI:1916463">
    <property type="gene designation" value="Zfp428"/>
</dbReference>
<dbReference type="VEuPathDB" id="HostDB:ENSMUSG00000064264"/>
<dbReference type="eggNOG" id="ENOG502T3CS">
    <property type="taxonomic scope" value="Eukaryota"/>
</dbReference>
<dbReference type="GeneTree" id="ENSGT00390000006595"/>
<dbReference type="InParanoid" id="Q8C1M2"/>
<dbReference type="OrthoDB" id="9634397at2759"/>
<dbReference type="PhylomeDB" id="Q8C1M2"/>
<dbReference type="TreeFam" id="TF337528"/>
<dbReference type="BioGRID-ORCS" id="232969">
    <property type="hits" value="3 hits in 77 CRISPR screens"/>
</dbReference>
<dbReference type="PRO" id="PR:Q8C1M2"/>
<dbReference type="Proteomes" id="UP000000589">
    <property type="component" value="Chromosome 7"/>
</dbReference>
<dbReference type="RNAct" id="Q8C1M2">
    <property type="molecule type" value="protein"/>
</dbReference>
<dbReference type="Bgee" id="ENSMUSG00000064264">
    <property type="expression patterns" value="Expressed in cortical plate and 199 other cell types or tissues"/>
</dbReference>
<dbReference type="ExpressionAtlas" id="Q8C1M2">
    <property type="expression patterns" value="baseline and differential"/>
</dbReference>
<dbReference type="GO" id="GO:0008270">
    <property type="term" value="F:zinc ion binding"/>
    <property type="evidence" value="ECO:0007669"/>
    <property type="project" value="UniProtKB-KW"/>
</dbReference>
<dbReference type="InterPro" id="IPR038977">
    <property type="entry name" value="ZNF428"/>
</dbReference>
<dbReference type="InterPro" id="IPR013087">
    <property type="entry name" value="Znf_C2H2_type"/>
</dbReference>
<dbReference type="PANTHER" id="PTHR36862">
    <property type="entry name" value="ZINC FINGER PROTEIN 428"/>
    <property type="match status" value="1"/>
</dbReference>
<dbReference type="PANTHER" id="PTHR36862:SF1">
    <property type="entry name" value="ZINC FINGER PROTEIN 428"/>
    <property type="match status" value="1"/>
</dbReference>
<dbReference type="PROSITE" id="PS00028">
    <property type="entry name" value="ZINC_FINGER_C2H2_1"/>
    <property type="match status" value="1"/>
</dbReference>
<dbReference type="PROSITE" id="PS50157">
    <property type="entry name" value="ZINC_FINGER_C2H2_2"/>
    <property type="match status" value="1"/>
</dbReference>
<feature type="chain" id="PRO_0000312347" description="Zinc finger protein 428">
    <location>
        <begin position="1"/>
        <end position="176"/>
    </location>
</feature>
<feature type="zinc finger region" description="C2H2-type" evidence="2">
    <location>
        <begin position="149"/>
        <end position="171"/>
    </location>
</feature>
<feature type="region of interest" description="Disordered" evidence="3">
    <location>
        <begin position="1"/>
        <end position="152"/>
    </location>
</feature>
<feature type="compositionally biased region" description="Acidic residues" evidence="3">
    <location>
        <begin position="16"/>
        <end position="46"/>
    </location>
</feature>
<feature type="compositionally biased region" description="Basic and acidic residues" evidence="3">
    <location>
        <begin position="126"/>
        <end position="138"/>
    </location>
</feature>
<feature type="modified residue" description="Phosphothreonine" evidence="1">
    <location>
        <position position="96"/>
    </location>
</feature>
<feature type="sequence conflict" description="In Ref. 2; AAH24802." evidence="4" ref="2">
    <original>G</original>
    <variation>R</variation>
    <location>
        <position position="90"/>
    </location>
</feature>
<feature type="sequence conflict" description="In Ref. 2; AAH96675." evidence="4" ref="2">
    <original>T</original>
    <variation>N</variation>
    <location>
        <position position="132"/>
    </location>
</feature>
<accession>Q8C1M2</accession>
<accession>Q4V9V1</accession>
<accession>Q8QZT0</accession>
<sequence>MTETREPTETGGYASLEEDDEDLSPEPDSEEEEEEEEEETTDDPEYDPGYKVKQRIGGGRGGPSRRAPRATQPAGPPAQPCQLCGRSALGEAPPGTPPCRLCCPATATQEAPGPESRALGEEEEEPSRTGETRPAGRDGDEDEEEGGTYHCTECEDSFDNLGELHGHFMLHARGEV</sequence>
<protein>
    <recommendedName>
        <fullName>Zinc finger protein 428</fullName>
    </recommendedName>
</protein>